<evidence type="ECO:0000255" key="1">
    <source>
        <dbReference type="HAMAP-Rule" id="MF_00111"/>
    </source>
</evidence>
<gene>
    <name evidence="1" type="primary">murA2</name>
    <name type="ordered locus">mll7251</name>
</gene>
<protein>
    <recommendedName>
        <fullName evidence="1">UDP-N-acetylglucosamine 1-carboxyvinyltransferase 2</fullName>
        <ecNumber evidence="1">2.5.1.7</ecNumber>
    </recommendedName>
    <alternativeName>
        <fullName evidence="1">Enoylpyruvate transferase 2</fullName>
    </alternativeName>
    <alternativeName>
        <fullName evidence="1">UDP-N-acetylglucosamine enolpyruvyl transferase 2</fullName>
        <shortName evidence="1">EPT 2</shortName>
    </alternativeName>
</protein>
<organism>
    <name type="scientific">Mesorhizobium japonicum (strain LMG 29417 / CECT 9101 / MAFF 303099)</name>
    <name type="common">Mesorhizobium loti (strain MAFF 303099)</name>
    <dbReference type="NCBI Taxonomy" id="266835"/>
    <lineage>
        <taxon>Bacteria</taxon>
        <taxon>Pseudomonadati</taxon>
        <taxon>Pseudomonadota</taxon>
        <taxon>Alphaproteobacteria</taxon>
        <taxon>Hyphomicrobiales</taxon>
        <taxon>Phyllobacteriaceae</taxon>
        <taxon>Mesorhizobium</taxon>
    </lineage>
</organism>
<sequence>MDRLRIVGGRRLEGAVTISGAKNAALPQIAAALLSPYPLELTNLPDVTDVENMLGVVRLHGAEVTRSAHAATIDTSAAVSKETSYDTVRKMRATVLVLAPLLARFGHARVSLPGGCAIGARPVDMHVAALAALGAKIAIENGLIVASAPNGLTGTRIVLSSPSVGATETAMMAATTAKGETEILNAAREPEVADLAACLNAMGARIEGAGTHRILIAGDTGWHAARHDIIPDRIEAGTYAIAAAITGGQLELTHARLEHMASVVQLLEATGVSVWPGDRGLIVSRERPLKAADLTTEPYPGFPTDLQAQFMALMCCAEGASLLRETIFENRFMHVPELMRLGANIKLQGTMALVRGGEKLHGAQVMATDLRASVSLVLAALVSEGETIINRVYHLDRGYEQLDRKLRLCGADIERLSA</sequence>
<feature type="chain" id="PRO_0000178907" description="UDP-N-acetylglucosamine 1-carboxyvinyltransferase 2">
    <location>
        <begin position="1"/>
        <end position="418"/>
    </location>
</feature>
<feature type="active site" description="Proton donor" evidence="1">
    <location>
        <position position="116"/>
    </location>
</feature>
<feature type="binding site" evidence="1">
    <location>
        <begin position="22"/>
        <end position="23"/>
    </location>
    <ligand>
        <name>phosphoenolpyruvate</name>
        <dbReference type="ChEBI" id="CHEBI:58702"/>
    </ligand>
</feature>
<feature type="binding site" evidence="1">
    <location>
        <position position="92"/>
    </location>
    <ligand>
        <name>UDP-N-acetyl-alpha-D-glucosamine</name>
        <dbReference type="ChEBI" id="CHEBI:57705"/>
    </ligand>
</feature>
<feature type="binding site" evidence="1">
    <location>
        <position position="305"/>
    </location>
    <ligand>
        <name>UDP-N-acetyl-alpha-D-glucosamine</name>
        <dbReference type="ChEBI" id="CHEBI:57705"/>
    </ligand>
</feature>
<feature type="binding site" evidence="1">
    <location>
        <position position="327"/>
    </location>
    <ligand>
        <name>UDP-N-acetyl-alpha-D-glucosamine</name>
        <dbReference type="ChEBI" id="CHEBI:57705"/>
    </ligand>
</feature>
<feature type="modified residue" description="2-(S-cysteinyl)pyruvic acid O-phosphothioketal" evidence="1">
    <location>
        <position position="116"/>
    </location>
</feature>
<proteinExistence type="inferred from homology"/>
<name>MURA2_RHILO</name>
<dbReference type="EC" id="2.5.1.7" evidence="1"/>
<dbReference type="EMBL" id="BA000012">
    <property type="protein sequence ID" value="BAB53397.1"/>
    <property type="molecule type" value="Genomic_DNA"/>
</dbReference>
<dbReference type="RefSeq" id="WP_010914704.1">
    <property type="nucleotide sequence ID" value="NC_002678.2"/>
</dbReference>
<dbReference type="SMR" id="Q986Q6"/>
<dbReference type="KEGG" id="mlo:mll7251"/>
<dbReference type="PATRIC" id="fig|266835.9.peg.5792"/>
<dbReference type="eggNOG" id="COG0766">
    <property type="taxonomic scope" value="Bacteria"/>
</dbReference>
<dbReference type="HOGENOM" id="CLU_027387_0_0_5"/>
<dbReference type="UniPathway" id="UPA00219"/>
<dbReference type="Proteomes" id="UP000000552">
    <property type="component" value="Chromosome"/>
</dbReference>
<dbReference type="GO" id="GO:0005737">
    <property type="term" value="C:cytoplasm"/>
    <property type="evidence" value="ECO:0007669"/>
    <property type="project" value="UniProtKB-SubCell"/>
</dbReference>
<dbReference type="GO" id="GO:0008760">
    <property type="term" value="F:UDP-N-acetylglucosamine 1-carboxyvinyltransferase activity"/>
    <property type="evidence" value="ECO:0007669"/>
    <property type="project" value="UniProtKB-UniRule"/>
</dbReference>
<dbReference type="GO" id="GO:0051301">
    <property type="term" value="P:cell division"/>
    <property type="evidence" value="ECO:0007669"/>
    <property type="project" value="UniProtKB-KW"/>
</dbReference>
<dbReference type="GO" id="GO:0071555">
    <property type="term" value="P:cell wall organization"/>
    <property type="evidence" value="ECO:0007669"/>
    <property type="project" value="UniProtKB-KW"/>
</dbReference>
<dbReference type="GO" id="GO:0009252">
    <property type="term" value="P:peptidoglycan biosynthetic process"/>
    <property type="evidence" value="ECO:0007669"/>
    <property type="project" value="UniProtKB-UniRule"/>
</dbReference>
<dbReference type="GO" id="GO:0008360">
    <property type="term" value="P:regulation of cell shape"/>
    <property type="evidence" value="ECO:0007669"/>
    <property type="project" value="UniProtKB-KW"/>
</dbReference>
<dbReference type="GO" id="GO:0019277">
    <property type="term" value="P:UDP-N-acetylgalactosamine biosynthetic process"/>
    <property type="evidence" value="ECO:0007669"/>
    <property type="project" value="InterPro"/>
</dbReference>
<dbReference type="CDD" id="cd01555">
    <property type="entry name" value="UdpNAET"/>
    <property type="match status" value="1"/>
</dbReference>
<dbReference type="Gene3D" id="3.65.10.10">
    <property type="entry name" value="Enolpyruvate transferase domain"/>
    <property type="match status" value="2"/>
</dbReference>
<dbReference type="HAMAP" id="MF_00111">
    <property type="entry name" value="MurA"/>
    <property type="match status" value="1"/>
</dbReference>
<dbReference type="InterPro" id="IPR001986">
    <property type="entry name" value="Enolpyruvate_Tfrase_dom"/>
</dbReference>
<dbReference type="InterPro" id="IPR036968">
    <property type="entry name" value="Enolpyruvate_Tfrase_sf"/>
</dbReference>
<dbReference type="InterPro" id="IPR050068">
    <property type="entry name" value="MurA_subfamily"/>
</dbReference>
<dbReference type="InterPro" id="IPR013792">
    <property type="entry name" value="RNA3'P_cycl/enolpyr_Trfase_a/b"/>
</dbReference>
<dbReference type="InterPro" id="IPR005750">
    <property type="entry name" value="UDP_GlcNAc_COvinyl_MurA"/>
</dbReference>
<dbReference type="NCBIfam" id="TIGR01072">
    <property type="entry name" value="murA"/>
    <property type="match status" value="1"/>
</dbReference>
<dbReference type="NCBIfam" id="NF006873">
    <property type="entry name" value="PRK09369.1"/>
    <property type="match status" value="1"/>
</dbReference>
<dbReference type="PANTHER" id="PTHR43783">
    <property type="entry name" value="UDP-N-ACETYLGLUCOSAMINE 1-CARBOXYVINYLTRANSFERASE"/>
    <property type="match status" value="1"/>
</dbReference>
<dbReference type="PANTHER" id="PTHR43783:SF1">
    <property type="entry name" value="UDP-N-ACETYLGLUCOSAMINE 1-CARBOXYVINYLTRANSFERASE"/>
    <property type="match status" value="1"/>
</dbReference>
<dbReference type="Pfam" id="PF00275">
    <property type="entry name" value="EPSP_synthase"/>
    <property type="match status" value="1"/>
</dbReference>
<dbReference type="SUPFAM" id="SSF55205">
    <property type="entry name" value="EPT/RTPC-like"/>
    <property type="match status" value="1"/>
</dbReference>
<comment type="function">
    <text evidence="1">Cell wall formation. Adds enolpyruvyl to UDP-N-acetylglucosamine.</text>
</comment>
<comment type="catalytic activity">
    <reaction evidence="1">
        <text>phosphoenolpyruvate + UDP-N-acetyl-alpha-D-glucosamine = UDP-N-acetyl-3-O-(1-carboxyvinyl)-alpha-D-glucosamine + phosphate</text>
        <dbReference type="Rhea" id="RHEA:18681"/>
        <dbReference type="ChEBI" id="CHEBI:43474"/>
        <dbReference type="ChEBI" id="CHEBI:57705"/>
        <dbReference type="ChEBI" id="CHEBI:58702"/>
        <dbReference type="ChEBI" id="CHEBI:68483"/>
        <dbReference type="EC" id="2.5.1.7"/>
    </reaction>
</comment>
<comment type="pathway">
    <text evidence="1">Cell wall biogenesis; peptidoglycan biosynthesis.</text>
</comment>
<comment type="subcellular location">
    <subcellularLocation>
        <location evidence="1">Cytoplasm</location>
    </subcellularLocation>
</comment>
<comment type="similarity">
    <text evidence="1">Belongs to the EPSP synthase family. MurA subfamily.</text>
</comment>
<keyword id="KW-0131">Cell cycle</keyword>
<keyword id="KW-0132">Cell division</keyword>
<keyword id="KW-0133">Cell shape</keyword>
<keyword id="KW-0961">Cell wall biogenesis/degradation</keyword>
<keyword id="KW-0963">Cytoplasm</keyword>
<keyword id="KW-0573">Peptidoglycan synthesis</keyword>
<keyword id="KW-0670">Pyruvate</keyword>
<keyword id="KW-0808">Transferase</keyword>
<reference key="1">
    <citation type="journal article" date="2000" name="DNA Res.">
        <title>Complete genome structure of the nitrogen-fixing symbiotic bacterium Mesorhizobium loti.</title>
        <authorList>
            <person name="Kaneko T."/>
            <person name="Nakamura Y."/>
            <person name="Sato S."/>
            <person name="Asamizu E."/>
            <person name="Kato T."/>
            <person name="Sasamoto S."/>
            <person name="Watanabe A."/>
            <person name="Idesawa K."/>
            <person name="Ishikawa A."/>
            <person name="Kawashima K."/>
            <person name="Kimura T."/>
            <person name="Kishida Y."/>
            <person name="Kiyokawa C."/>
            <person name="Kohara M."/>
            <person name="Matsumoto M."/>
            <person name="Matsuno A."/>
            <person name="Mochizuki Y."/>
            <person name="Nakayama S."/>
            <person name="Nakazaki N."/>
            <person name="Shimpo S."/>
            <person name="Sugimoto M."/>
            <person name="Takeuchi C."/>
            <person name="Yamada M."/>
            <person name="Tabata S."/>
        </authorList>
    </citation>
    <scope>NUCLEOTIDE SEQUENCE [LARGE SCALE GENOMIC DNA]</scope>
    <source>
        <strain>LMG 29417 / CECT 9101 / MAFF 303099</strain>
    </source>
</reference>
<accession>Q986Q6</accession>